<keyword id="KW-1003">Cell membrane</keyword>
<keyword id="KW-1015">Disulfide bond</keyword>
<keyword id="KW-0297">G-protein coupled receptor</keyword>
<keyword id="KW-0325">Glycoprotein</keyword>
<keyword id="KW-0449">Lipoprotein</keyword>
<keyword id="KW-0472">Membrane</keyword>
<keyword id="KW-0564">Palmitate</keyword>
<keyword id="KW-0675">Receptor</keyword>
<keyword id="KW-1185">Reference proteome</keyword>
<keyword id="KW-0807">Transducer</keyword>
<keyword id="KW-0812">Transmembrane</keyword>
<keyword id="KW-1133">Transmembrane helix</keyword>
<protein>
    <recommendedName>
        <fullName>Gastrin/cholecystokinin type B receptor</fullName>
        <shortName>CCK-B receptor</shortName>
        <shortName>CCK-BR</shortName>
    </recommendedName>
    <alternativeName>
        <fullName>Cholecystokinin-2 receptor</fullName>
        <shortName>CCK2-R</shortName>
    </alternativeName>
</protein>
<dbReference type="EMBL" id="S83090">
    <property type="protein sequence ID" value="AAB46896.1"/>
    <property type="molecule type" value="mRNA"/>
</dbReference>
<dbReference type="EMBL" id="BC112800">
    <property type="protein sequence ID" value="AAI12801.1"/>
    <property type="molecule type" value="mRNA"/>
</dbReference>
<dbReference type="RefSeq" id="NP_776687.2">
    <property type="nucleotide sequence ID" value="NM_174262.3"/>
</dbReference>
<dbReference type="SMR" id="P79266"/>
<dbReference type="FunCoup" id="P79266">
    <property type="interactions" value="163"/>
</dbReference>
<dbReference type="STRING" id="9913.ENSBTAP00000006892"/>
<dbReference type="BindingDB" id="P79266"/>
<dbReference type="ChEMBL" id="CHEMBL2720"/>
<dbReference type="GlyCosmos" id="P79266">
    <property type="glycosylation" value="3 sites, No reported glycans"/>
</dbReference>
<dbReference type="GlyGen" id="P79266">
    <property type="glycosylation" value="3 sites"/>
</dbReference>
<dbReference type="PaxDb" id="9913-ENSBTAP00000006892"/>
<dbReference type="GeneID" id="281665"/>
<dbReference type="KEGG" id="bta:281665"/>
<dbReference type="CTD" id="887"/>
<dbReference type="eggNOG" id="KOG3656">
    <property type="taxonomic scope" value="Eukaryota"/>
</dbReference>
<dbReference type="HOGENOM" id="CLU_009579_6_3_1"/>
<dbReference type="InParanoid" id="P79266"/>
<dbReference type="OrthoDB" id="5987936at2759"/>
<dbReference type="TreeFam" id="TF315303"/>
<dbReference type="PRO" id="PR:P79266"/>
<dbReference type="Proteomes" id="UP000009136">
    <property type="component" value="Unplaced"/>
</dbReference>
<dbReference type="GO" id="GO:0005886">
    <property type="term" value="C:plasma membrane"/>
    <property type="evidence" value="ECO:0000318"/>
    <property type="project" value="GO_Central"/>
</dbReference>
<dbReference type="GO" id="GO:0004951">
    <property type="term" value="F:cholecystokinin receptor activity"/>
    <property type="evidence" value="ECO:0000318"/>
    <property type="project" value="GO_Central"/>
</dbReference>
<dbReference type="GO" id="GO:0015054">
    <property type="term" value="F:gastrin receptor activity"/>
    <property type="evidence" value="ECO:0000250"/>
    <property type="project" value="UniProtKB"/>
</dbReference>
<dbReference type="GO" id="GO:0008188">
    <property type="term" value="F:neuropeptide receptor activity"/>
    <property type="evidence" value="ECO:0000318"/>
    <property type="project" value="GO_Central"/>
</dbReference>
<dbReference type="GO" id="GO:0007218">
    <property type="term" value="P:neuropeptide signaling pathway"/>
    <property type="evidence" value="ECO:0000318"/>
    <property type="project" value="GO_Central"/>
</dbReference>
<dbReference type="GO" id="GO:0007200">
    <property type="term" value="P:phospholipase C-activating G protein-coupled receptor signaling pathway"/>
    <property type="evidence" value="ECO:0000318"/>
    <property type="project" value="GO_Central"/>
</dbReference>
<dbReference type="GO" id="GO:0008284">
    <property type="term" value="P:positive regulation of cell population proliferation"/>
    <property type="evidence" value="ECO:0000250"/>
    <property type="project" value="UniProtKB"/>
</dbReference>
<dbReference type="GO" id="GO:0007204">
    <property type="term" value="P:positive regulation of cytosolic calcium ion concentration"/>
    <property type="evidence" value="ECO:0000250"/>
    <property type="project" value="UniProtKB"/>
</dbReference>
<dbReference type="Gene3D" id="1.20.1070.10">
    <property type="entry name" value="Rhodopsin 7-helix transmembrane proteins"/>
    <property type="match status" value="1"/>
</dbReference>
<dbReference type="InterPro" id="IPR009126">
    <property type="entry name" value="Cholcskin_rcpt"/>
</dbReference>
<dbReference type="InterPro" id="IPR000314">
    <property type="entry name" value="Gastrin_rcpt"/>
</dbReference>
<dbReference type="InterPro" id="IPR000276">
    <property type="entry name" value="GPCR_Rhodpsn"/>
</dbReference>
<dbReference type="InterPro" id="IPR017452">
    <property type="entry name" value="GPCR_Rhodpsn_7TM"/>
</dbReference>
<dbReference type="PANTHER" id="PTHR24243">
    <property type="entry name" value="G-PROTEIN COUPLED RECEPTOR"/>
    <property type="match status" value="1"/>
</dbReference>
<dbReference type="PANTHER" id="PTHR24243:SF45">
    <property type="entry name" value="GASTRIN_CHOLECYSTOKININ TYPE B RECEPTOR"/>
    <property type="match status" value="1"/>
</dbReference>
<dbReference type="Pfam" id="PF00001">
    <property type="entry name" value="7tm_1"/>
    <property type="match status" value="1"/>
</dbReference>
<dbReference type="PRINTS" id="PR01822">
    <property type="entry name" value="CCYSTOKININR"/>
</dbReference>
<dbReference type="PRINTS" id="PR00527">
    <property type="entry name" value="GASTRINR"/>
</dbReference>
<dbReference type="PRINTS" id="PR00237">
    <property type="entry name" value="GPCRRHODOPSN"/>
</dbReference>
<dbReference type="SUPFAM" id="SSF81321">
    <property type="entry name" value="Family A G protein-coupled receptor-like"/>
    <property type="match status" value="1"/>
</dbReference>
<dbReference type="PROSITE" id="PS00237">
    <property type="entry name" value="G_PROTEIN_RECEP_F1_1"/>
    <property type="match status" value="1"/>
</dbReference>
<dbReference type="PROSITE" id="PS50262">
    <property type="entry name" value="G_PROTEIN_RECEP_F1_2"/>
    <property type="match status" value="1"/>
</dbReference>
<accession>P79266</accession>
<accession>Q2KI20</accession>
<comment type="function">
    <text>Receptor for gastrin and cholecystokinin. The CCK-B receptors occur throughout the central nervous system where they modulate anxiety, analgesia, arousal, and neuroleptic activity. This receptor mediates its action by association with G proteins that activate a phosphatidylinositol-calcium second messenger system.</text>
</comment>
<comment type="subcellular location">
    <subcellularLocation>
        <location>Cell membrane</location>
        <topology>Multi-pass membrane protein</topology>
    </subcellularLocation>
</comment>
<comment type="similarity">
    <text evidence="3">Belongs to the G-protein coupled receptor 1 family.</text>
</comment>
<gene>
    <name type="primary">CCKBR</name>
</gene>
<reference key="1">
    <citation type="journal article" date="1996" name="Eur. J. Pharmacol.">
        <title>Molecular cloning, developmental expression and pharmacological characterization of the CCKB/gastrin receptor in the calf pancreas.</title>
        <authorList>
            <person name="Dufresne M."/>
            <person name="Escrieut C."/>
            <person name="Clerc P."/>
            <person name="le Huerou-Luron I."/>
            <person name="Prats H."/>
            <person name="Bertrand V."/>
            <person name="le Meuth V."/>
            <person name="Guilloteau P."/>
            <person name="Vaysse N."/>
            <person name="Fourmy D."/>
        </authorList>
    </citation>
    <scope>NUCLEOTIDE SEQUENCE [MRNA]</scope>
    <source>
        <tissue>Pancreas</tissue>
    </source>
</reference>
<reference key="2">
    <citation type="submission" date="2006-01" db="EMBL/GenBank/DDBJ databases">
        <authorList>
            <consortium name="NIH - Mammalian Gene Collection (MGC) project"/>
        </authorList>
    </citation>
    <scope>NUCLEOTIDE SEQUENCE [LARGE SCALE MRNA]</scope>
    <source>
        <strain>Hereford</strain>
        <tissue>Hypothalamus</tissue>
    </source>
</reference>
<proteinExistence type="evidence at transcript level"/>
<sequence length="454" mass="48781">MELLKPNRSVLGSGPGPGASLCRSGGPLLNGSGTGNLSCEPPRIRGAGTRELELAIRVTLYAVIFLMSVGGNVLIIVVLGLSRRLRTVTNAFLLSLAVSDLLLAVACMPFTLLPNLMGTFIFGTVVCKAVSYFMGVSVSVSTLSLVAIALERYSAICRPLQARVWQTRSHAARVIVATWMLSGLLMVPYPVYTAVQPAGPRVLQCMHRWPSARVRQTWSVLLLLLLFFVPGVVMAVAYGLISRELYLGLRFDGDSDSESQSRVGSQGGLPGGTGQGPAQANGRCRSETRLAGEDGDGCYVQLPRSRPALEMSALTAPTPGPGSGTRPAQAKLLAKKRVVRMLLVIVVLFFLCWLPVYSANTWRAFDGPGAHRALSGAPISFIHLLTYASACVNPLVYCFMHRRFRQACLDTCTRCCPRPPRARPRPLPDEDPPTPSIASLSRLSYTTISTLGPG</sequence>
<organism>
    <name type="scientific">Bos taurus</name>
    <name type="common">Bovine</name>
    <dbReference type="NCBI Taxonomy" id="9913"/>
    <lineage>
        <taxon>Eukaryota</taxon>
        <taxon>Metazoa</taxon>
        <taxon>Chordata</taxon>
        <taxon>Craniata</taxon>
        <taxon>Vertebrata</taxon>
        <taxon>Euteleostomi</taxon>
        <taxon>Mammalia</taxon>
        <taxon>Eutheria</taxon>
        <taxon>Laurasiatheria</taxon>
        <taxon>Artiodactyla</taxon>
        <taxon>Ruminantia</taxon>
        <taxon>Pecora</taxon>
        <taxon>Bovidae</taxon>
        <taxon>Bovinae</taxon>
        <taxon>Bos</taxon>
    </lineage>
</organism>
<feature type="chain" id="PRO_0000069472" description="Gastrin/cholecystokinin type B receptor">
    <location>
        <begin position="1"/>
        <end position="454"/>
    </location>
</feature>
<feature type="topological domain" description="Extracellular" evidence="2">
    <location>
        <begin position="1"/>
        <end position="57"/>
    </location>
</feature>
<feature type="transmembrane region" description="Helical; Name=1" evidence="2">
    <location>
        <begin position="58"/>
        <end position="79"/>
    </location>
</feature>
<feature type="topological domain" description="Cytoplasmic" evidence="2">
    <location>
        <begin position="80"/>
        <end position="87"/>
    </location>
</feature>
<feature type="transmembrane region" description="Helical; Name=2" evidence="2">
    <location>
        <begin position="88"/>
        <end position="109"/>
    </location>
</feature>
<feature type="topological domain" description="Extracellular" evidence="2">
    <location>
        <begin position="110"/>
        <end position="131"/>
    </location>
</feature>
<feature type="transmembrane region" description="Helical; Name=3" evidence="2">
    <location>
        <begin position="132"/>
        <end position="150"/>
    </location>
</feature>
<feature type="topological domain" description="Cytoplasmic" evidence="2">
    <location>
        <begin position="151"/>
        <end position="170"/>
    </location>
</feature>
<feature type="transmembrane region" description="Helical; Name=4" evidence="2">
    <location>
        <begin position="171"/>
        <end position="189"/>
    </location>
</feature>
<feature type="topological domain" description="Extracellular" evidence="2">
    <location>
        <begin position="190"/>
        <end position="219"/>
    </location>
</feature>
<feature type="transmembrane region" description="Helical; Name=5" evidence="2">
    <location>
        <begin position="220"/>
        <end position="242"/>
    </location>
</feature>
<feature type="topological domain" description="Cytoplasmic" evidence="2">
    <location>
        <begin position="243"/>
        <end position="340"/>
    </location>
</feature>
<feature type="transmembrane region" description="Helical; Name=6" evidence="2">
    <location>
        <begin position="341"/>
        <end position="362"/>
    </location>
</feature>
<feature type="topological domain" description="Extracellular" evidence="2">
    <location>
        <begin position="363"/>
        <end position="380"/>
    </location>
</feature>
<feature type="transmembrane region" description="Helical; Name=7" evidence="2">
    <location>
        <begin position="381"/>
        <end position="401"/>
    </location>
</feature>
<feature type="topological domain" description="Cytoplasmic" evidence="2">
    <location>
        <begin position="402"/>
        <end position="454"/>
    </location>
</feature>
<feature type="region of interest" description="Disordered" evidence="4">
    <location>
        <begin position="257"/>
        <end position="284"/>
    </location>
</feature>
<feature type="region of interest" description="Disordered" evidence="4">
    <location>
        <begin position="422"/>
        <end position="441"/>
    </location>
</feature>
<feature type="compositionally biased region" description="Gly residues" evidence="4">
    <location>
        <begin position="265"/>
        <end position="275"/>
    </location>
</feature>
<feature type="lipid moiety-binding region" description="S-palmitoyl cysteine" evidence="1">
    <location>
        <position position="415"/>
    </location>
</feature>
<feature type="glycosylation site" description="N-linked (GlcNAc...) asparagine" evidence="2">
    <location>
        <position position="7"/>
    </location>
</feature>
<feature type="glycosylation site" description="N-linked (GlcNAc...) asparagine" evidence="2">
    <location>
        <position position="30"/>
    </location>
</feature>
<feature type="glycosylation site" description="N-linked (GlcNAc...) asparagine" evidence="2">
    <location>
        <position position="36"/>
    </location>
</feature>
<feature type="disulfide bond" evidence="3">
    <location>
        <begin position="127"/>
        <end position="205"/>
    </location>
</feature>
<feature type="sequence conflict" description="In Ref. 2; AAI12801." evidence="5" ref="2">
    <original>T</original>
    <variation>S</variation>
    <location>
        <position position="386"/>
    </location>
</feature>
<name>GASR_BOVIN</name>
<evidence type="ECO:0000250" key="1">
    <source>
        <dbReference type="UniProtKB" id="P17124"/>
    </source>
</evidence>
<evidence type="ECO:0000255" key="2"/>
<evidence type="ECO:0000255" key="3">
    <source>
        <dbReference type="PROSITE-ProRule" id="PRU00521"/>
    </source>
</evidence>
<evidence type="ECO:0000256" key="4">
    <source>
        <dbReference type="SAM" id="MobiDB-lite"/>
    </source>
</evidence>
<evidence type="ECO:0000305" key="5"/>